<sequence length="142" mass="15719">MTLTQAEKAAVITIWTKVATQADAIGAESLERLFSSYPQTKTYFPHFDLSQGSTQLRGHGSKVMNAIGEAVKNIDDIRGALAKLSELHAYILRVDPVNFKLLCHCILCSVAARYPSDFTPEVHAAWDKFLSSVSSVLTEKYR</sequence>
<feature type="initiator methionine" description="Removed">
    <location>
        <position position="1"/>
    </location>
</feature>
<feature type="chain" id="PRO_0000053271" description="Hemoglobin subunit pi">
    <location>
        <begin position="2"/>
        <end position="142"/>
    </location>
</feature>
<feature type="domain" description="Globin" evidence="1">
    <location>
        <begin position="2"/>
        <end position="142"/>
    </location>
</feature>
<feature type="binding site" description="distal binding residue">
    <location>
        <position position="59"/>
    </location>
    <ligand>
        <name>heme b</name>
        <dbReference type="ChEBI" id="CHEBI:60344"/>
    </ligand>
    <ligandPart>
        <name>Fe</name>
        <dbReference type="ChEBI" id="CHEBI:18248"/>
    </ligandPart>
</feature>
<feature type="binding site" description="proximal binding residue">
    <location>
        <position position="88"/>
    </location>
    <ligand>
        <name>heme b</name>
        <dbReference type="ChEBI" id="CHEBI:60344"/>
    </ligand>
    <ligandPart>
        <name>Fe</name>
        <dbReference type="ChEBI" id="CHEBI:18248"/>
    </ligandPart>
</feature>
<keyword id="KW-0349">Heme</keyword>
<keyword id="KW-0408">Iron</keyword>
<keyword id="KW-0479">Metal-binding</keyword>
<keyword id="KW-0561">Oxygen transport</keyword>
<keyword id="KW-1185">Reference proteome</keyword>
<keyword id="KW-0813">Transport</keyword>
<accession>P04243</accession>
<proteinExistence type="inferred from homology"/>
<name>HBPI_CAIMO</name>
<dbReference type="EMBL" id="M10141">
    <property type="protein sequence ID" value="AAA49150.1"/>
    <property type="molecule type" value="Genomic_DNA"/>
</dbReference>
<dbReference type="PIR" id="A02335">
    <property type="entry name" value="HADKP"/>
</dbReference>
<dbReference type="SMR" id="P04243"/>
<dbReference type="Proteomes" id="UP000694556">
    <property type="component" value="Unplaced"/>
</dbReference>
<dbReference type="GO" id="GO:0072562">
    <property type="term" value="C:blood microparticle"/>
    <property type="evidence" value="ECO:0007669"/>
    <property type="project" value="TreeGrafter"/>
</dbReference>
<dbReference type="GO" id="GO:0031838">
    <property type="term" value="C:haptoglobin-hemoglobin complex"/>
    <property type="evidence" value="ECO:0007669"/>
    <property type="project" value="TreeGrafter"/>
</dbReference>
<dbReference type="GO" id="GO:0005833">
    <property type="term" value="C:hemoglobin complex"/>
    <property type="evidence" value="ECO:0007669"/>
    <property type="project" value="InterPro"/>
</dbReference>
<dbReference type="GO" id="GO:0031720">
    <property type="term" value="F:haptoglobin binding"/>
    <property type="evidence" value="ECO:0007669"/>
    <property type="project" value="TreeGrafter"/>
</dbReference>
<dbReference type="GO" id="GO:0020037">
    <property type="term" value="F:heme binding"/>
    <property type="evidence" value="ECO:0007669"/>
    <property type="project" value="InterPro"/>
</dbReference>
<dbReference type="GO" id="GO:0005506">
    <property type="term" value="F:iron ion binding"/>
    <property type="evidence" value="ECO:0007669"/>
    <property type="project" value="InterPro"/>
</dbReference>
<dbReference type="GO" id="GO:0043177">
    <property type="term" value="F:organic acid binding"/>
    <property type="evidence" value="ECO:0007669"/>
    <property type="project" value="TreeGrafter"/>
</dbReference>
<dbReference type="GO" id="GO:0019825">
    <property type="term" value="F:oxygen binding"/>
    <property type="evidence" value="ECO:0007669"/>
    <property type="project" value="InterPro"/>
</dbReference>
<dbReference type="GO" id="GO:0005344">
    <property type="term" value="F:oxygen carrier activity"/>
    <property type="evidence" value="ECO:0007669"/>
    <property type="project" value="UniProtKB-KW"/>
</dbReference>
<dbReference type="GO" id="GO:0004601">
    <property type="term" value="F:peroxidase activity"/>
    <property type="evidence" value="ECO:0007669"/>
    <property type="project" value="TreeGrafter"/>
</dbReference>
<dbReference type="GO" id="GO:0042744">
    <property type="term" value="P:hydrogen peroxide catabolic process"/>
    <property type="evidence" value="ECO:0007669"/>
    <property type="project" value="TreeGrafter"/>
</dbReference>
<dbReference type="CDD" id="cd08927">
    <property type="entry name" value="Hb-alpha-like"/>
    <property type="match status" value="1"/>
</dbReference>
<dbReference type="FunFam" id="1.10.490.10:FF:000002">
    <property type="entry name" value="Hemoglobin subunit alpha"/>
    <property type="match status" value="1"/>
</dbReference>
<dbReference type="Gene3D" id="1.10.490.10">
    <property type="entry name" value="Globins"/>
    <property type="match status" value="1"/>
</dbReference>
<dbReference type="InterPro" id="IPR000971">
    <property type="entry name" value="Globin"/>
</dbReference>
<dbReference type="InterPro" id="IPR009050">
    <property type="entry name" value="Globin-like_sf"/>
</dbReference>
<dbReference type="InterPro" id="IPR012292">
    <property type="entry name" value="Globin/Proto"/>
</dbReference>
<dbReference type="InterPro" id="IPR002338">
    <property type="entry name" value="Hemoglobin_a-typ"/>
</dbReference>
<dbReference type="InterPro" id="IPR050056">
    <property type="entry name" value="Hemoglobin_oxygen_transport"/>
</dbReference>
<dbReference type="InterPro" id="IPR002339">
    <property type="entry name" value="Hemoglobin_pi"/>
</dbReference>
<dbReference type="PANTHER" id="PTHR11442">
    <property type="entry name" value="HEMOGLOBIN FAMILY MEMBER"/>
    <property type="match status" value="1"/>
</dbReference>
<dbReference type="PANTHER" id="PTHR11442:SF41">
    <property type="entry name" value="HEMOGLOBIN SUBUNIT ZETA"/>
    <property type="match status" value="1"/>
</dbReference>
<dbReference type="Pfam" id="PF00042">
    <property type="entry name" value="Globin"/>
    <property type="match status" value="1"/>
</dbReference>
<dbReference type="PRINTS" id="PR00612">
    <property type="entry name" value="ALPHAHAEM"/>
</dbReference>
<dbReference type="PRINTS" id="PR00815">
    <property type="entry name" value="PIHAEM"/>
</dbReference>
<dbReference type="SUPFAM" id="SSF46458">
    <property type="entry name" value="Globin-like"/>
    <property type="match status" value="1"/>
</dbReference>
<dbReference type="PROSITE" id="PS01033">
    <property type="entry name" value="GLOBIN"/>
    <property type="match status" value="1"/>
</dbReference>
<protein>
    <recommendedName>
        <fullName>Hemoglobin subunit pi</fullName>
    </recommendedName>
    <alternativeName>
        <fullName>Hemoglobin pi chain</fullName>
    </alternativeName>
    <alternativeName>
        <fullName>Hemoglobin pi' chain</fullName>
    </alternativeName>
    <alternativeName>
        <fullName>Pi-globin</fullName>
    </alternativeName>
</protein>
<reference key="1">
    <citation type="journal article" date="1984" name="Gene">
        <title>Chromosomal arrangement of the duck alpha-globin genes and primary structure of the embryonic alpha-globin gene pi.</title>
        <authorList>
            <person name="Erbil C."/>
            <person name="Niessing J."/>
        </authorList>
    </citation>
    <scope>NUCLEOTIDE SEQUENCE [GENOMIC DNA]</scope>
</reference>
<comment type="function">
    <text>The pi' chain is the counterpart of the alpha chain in the major early embryonic hemoglobin P.</text>
</comment>
<comment type="similarity">
    <text evidence="1">Belongs to the globin family.</text>
</comment>
<organism>
    <name type="scientific">Cairina moschata</name>
    <name type="common">Muscovy duck</name>
    <dbReference type="NCBI Taxonomy" id="8855"/>
    <lineage>
        <taxon>Eukaryota</taxon>
        <taxon>Metazoa</taxon>
        <taxon>Chordata</taxon>
        <taxon>Craniata</taxon>
        <taxon>Vertebrata</taxon>
        <taxon>Euteleostomi</taxon>
        <taxon>Archelosauria</taxon>
        <taxon>Archosauria</taxon>
        <taxon>Dinosauria</taxon>
        <taxon>Saurischia</taxon>
        <taxon>Theropoda</taxon>
        <taxon>Coelurosauria</taxon>
        <taxon>Aves</taxon>
        <taxon>Neognathae</taxon>
        <taxon>Galloanserae</taxon>
        <taxon>Anseriformes</taxon>
        <taxon>Anatidae</taxon>
        <taxon>Anatinae</taxon>
        <taxon>Cairina</taxon>
    </lineage>
</organism>
<evidence type="ECO:0000255" key="1">
    <source>
        <dbReference type="PROSITE-ProRule" id="PRU00238"/>
    </source>
</evidence>